<name>RL15_HAHCH</name>
<feature type="chain" id="PRO_0000251518" description="Large ribosomal subunit protein uL15">
    <location>
        <begin position="1"/>
        <end position="144"/>
    </location>
</feature>
<feature type="region of interest" description="Disordered" evidence="2">
    <location>
        <begin position="1"/>
        <end position="60"/>
    </location>
</feature>
<feature type="compositionally biased region" description="Gly residues" evidence="2">
    <location>
        <begin position="21"/>
        <end position="31"/>
    </location>
</feature>
<keyword id="KW-1185">Reference proteome</keyword>
<keyword id="KW-0687">Ribonucleoprotein</keyword>
<keyword id="KW-0689">Ribosomal protein</keyword>
<keyword id="KW-0694">RNA-binding</keyword>
<keyword id="KW-0699">rRNA-binding</keyword>
<comment type="function">
    <text evidence="1">Binds to the 23S rRNA.</text>
</comment>
<comment type="subunit">
    <text evidence="1">Part of the 50S ribosomal subunit.</text>
</comment>
<comment type="similarity">
    <text evidence="1">Belongs to the universal ribosomal protein uL15 family.</text>
</comment>
<accession>Q2S931</accession>
<dbReference type="EMBL" id="CP000155">
    <property type="protein sequence ID" value="ABC32843.1"/>
    <property type="molecule type" value="Genomic_DNA"/>
</dbReference>
<dbReference type="RefSeq" id="WP_011399901.1">
    <property type="nucleotide sequence ID" value="NC_007645.1"/>
</dbReference>
<dbReference type="SMR" id="Q2S931"/>
<dbReference type="STRING" id="349521.HCH_06198"/>
<dbReference type="KEGG" id="hch:HCH_06198"/>
<dbReference type="eggNOG" id="COG0200">
    <property type="taxonomic scope" value="Bacteria"/>
</dbReference>
<dbReference type="HOGENOM" id="CLU_055188_4_2_6"/>
<dbReference type="OrthoDB" id="9810293at2"/>
<dbReference type="Proteomes" id="UP000000238">
    <property type="component" value="Chromosome"/>
</dbReference>
<dbReference type="GO" id="GO:0022625">
    <property type="term" value="C:cytosolic large ribosomal subunit"/>
    <property type="evidence" value="ECO:0007669"/>
    <property type="project" value="TreeGrafter"/>
</dbReference>
<dbReference type="GO" id="GO:0019843">
    <property type="term" value="F:rRNA binding"/>
    <property type="evidence" value="ECO:0007669"/>
    <property type="project" value="UniProtKB-UniRule"/>
</dbReference>
<dbReference type="GO" id="GO:0003735">
    <property type="term" value="F:structural constituent of ribosome"/>
    <property type="evidence" value="ECO:0007669"/>
    <property type="project" value="InterPro"/>
</dbReference>
<dbReference type="GO" id="GO:0006412">
    <property type="term" value="P:translation"/>
    <property type="evidence" value="ECO:0007669"/>
    <property type="project" value="UniProtKB-UniRule"/>
</dbReference>
<dbReference type="Gene3D" id="3.100.10.10">
    <property type="match status" value="1"/>
</dbReference>
<dbReference type="HAMAP" id="MF_01341">
    <property type="entry name" value="Ribosomal_uL15"/>
    <property type="match status" value="1"/>
</dbReference>
<dbReference type="InterPro" id="IPR030878">
    <property type="entry name" value="Ribosomal_uL15"/>
</dbReference>
<dbReference type="InterPro" id="IPR021131">
    <property type="entry name" value="Ribosomal_uL15/eL18"/>
</dbReference>
<dbReference type="InterPro" id="IPR036227">
    <property type="entry name" value="Ribosomal_uL15/eL18_sf"/>
</dbReference>
<dbReference type="InterPro" id="IPR005749">
    <property type="entry name" value="Ribosomal_uL15_bac-type"/>
</dbReference>
<dbReference type="InterPro" id="IPR001196">
    <property type="entry name" value="Ribosomal_uL15_CS"/>
</dbReference>
<dbReference type="NCBIfam" id="TIGR01071">
    <property type="entry name" value="rplO_bact"/>
    <property type="match status" value="1"/>
</dbReference>
<dbReference type="PANTHER" id="PTHR12934">
    <property type="entry name" value="50S RIBOSOMAL PROTEIN L15"/>
    <property type="match status" value="1"/>
</dbReference>
<dbReference type="PANTHER" id="PTHR12934:SF11">
    <property type="entry name" value="LARGE RIBOSOMAL SUBUNIT PROTEIN UL15M"/>
    <property type="match status" value="1"/>
</dbReference>
<dbReference type="Pfam" id="PF00828">
    <property type="entry name" value="Ribosomal_L27A"/>
    <property type="match status" value="1"/>
</dbReference>
<dbReference type="SUPFAM" id="SSF52080">
    <property type="entry name" value="Ribosomal proteins L15p and L18e"/>
    <property type="match status" value="1"/>
</dbReference>
<dbReference type="PROSITE" id="PS00475">
    <property type="entry name" value="RIBOSOMAL_L15"/>
    <property type="match status" value="1"/>
</dbReference>
<evidence type="ECO:0000255" key="1">
    <source>
        <dbReference type="HAMAP-Rule" id="MF_01341"/>
    </source>
</evidence>
<evidence type="ECO:0000256" key="2">
    <source>
        <dbReference type="SAM" id="MobiDB-lite"/>
    </source>
</evidence>
<evidence type="ECO:0000305" key="3"/>
<reference key="1">
    <citation type="journal article" date="2005" name="Nucleic Acids Res.">
        <title>Genomic blueprint of Hahella chejuensis, a marine microbe producing an algicidal agent.</title>
        <authorList>
            <person name="Jeong H."/>
            <person name="Yim J.H."/>
            <person name="Lee C."/>
            <person name="Choi S.-H."/>
            <person name="Park Y.K."/>
            <person name="Yoon S.H."/>
            <person name="Hur C.-G."/>
            <person name="Kang H.-Y."/>
            <person name="Kim D."/>
            <person name="Lee H.H."/>
            <person name="Park K.H."/>
            <person name="Park S.-H."/>
            <person name="Park H.-S."/>
            <person name="Lee H.K."/>
            <person name="Oh T.K."/>
            <person name="Kim J.F."/>
        </authorList>
    </citation>
    <scope>NUCLEOTIDE SEQUENCE [LARGE SCALE GENOMIC DNA]</scope>
    <source>
        <strain>KCTC 2396</strain>
    </source>
</reference>
<organism>
    <name type="scientific">Hahella chejuensis (strain KCTC 2396)</name>
    <dbReference type="NCBI Taxonomy" id="349521"/>
    <lineage>
        <taxon>Bacteria</taxon>
        <taxon>Pseudomonadati</taxon>
        <taxon>Pseudomonadota</taxon>
        <taxon>Gammaproteobacteria</taxon>
        <taxon>Oceanospirillales</taxon>
        <taxon>Hahellaceae</taxon>
        <taxon>Hahella</taxon>
    </lineage>
</organism>
<proteinExistence type="inferred from homology"/>
<sequence length="144" mass="15166">MKMNTLKPAEGSKQSPKRLGRGIGSGLGKTGGRGHKGQTSRSGGTIRPGFEGGQQPLQRRLPKFGFTSRVGRFSEEVRLSEIDSLGTDIIDLAALKAANIVDQQAKQVKVILSGEITRAVTVKGLKVTKGAQEAIQAAGGKVEE</sequence>
<gene>
    <name evidence="1" type="primary">rplO</name>
    <name type="ordered locus">HCH_06198</name>
</gene>
<protein>
    <recommendedName>
        <fullName evidence="1">Large ribosomal subunit protein uL15</fullName>
    </recommendedName>
    <alternativeName>
        <fullName evidence="3">50S ribosomal protein L15</fullName>
    </alternativeName>
</protein>